<accession>Q6GEN2</accession>
<evidence type="ECO:0000255" key="1">
    <source>
        <dbReference type="HAMAP-Rule" id="MF_01968"/>
    </source>
</evidence>
<evidence type="ECO:0000255" key="2">
    <source>
        <dbReference type="PROSITE-ProRule" id="PRU00236"/>
    </source>
</evidence>
<name>NPD_STAAR</name>
<sequence length="243" mass="27036">MKHDLETLKHIIDSSNRITFFTGAGVSVASGVPDFRSMGGLFDEISKDGLSPEYLLSRDYLEDDPEGFINFCHKRLLFVDTMPNIVHDWIAKLERNQQSLGVITQNIDGLHSDAGSQHVDELHGTLNRFYCNACHKSYMKSDVIDRTLKHCDNCGGAIRPDIVLYGEMLDQPTIIRALNKIEDADTLVVLGSSLVVQPAAGLISNFKGDNLIIINKDRTPYDNDATLVIHDDMVSVVKSLMTE</sequence>
<gene>
    <name evidence="1" type="primary">cobB</name>
    <name type="ordered locus">SAR2288</name>
</gene>
<keyword id="KW-0963">Cytoplasm</keyword>
<keyword id="KW-0479">Metal-binding</keyword>
<keyword id="KW-0520">NAD</keyword>
<keyword id="KW-0808">Transferase</keyword>
<keyword id="KW-0862">Zinc</keyword>
<proteinExistence type="inferred from homology"/>
<organism>
    <name type="scientific">Staphylococcus aureus (strain MRSA252)</name>
    <dbReference type="NCBI Taxonomy" id="282458"/>
    <lineage>
        <taxon>Bacteria</taxon>
        <taxon>Bacillati</taxon>
        <taxon>Bacillota</taxon>
        <taxon>Bacilli</taxon>
        <taxon>Bacillales</taxon>
        <taxon>Staphylococcaceae</taxon>
        <taxon>Staphylococcus</taxon>
    </lineage>
</organism>
<feature type="chain" id="PRO_0000110353" description="NAD-dependent protein deacetylase">
    <location>
        <begin position="1"/>
        <end position="243"/>
    </location>
</feature>
<feature type="domain" description="Deacetylase sirtuin-type" evidence="2">
    <location>
        <begin position="1"/>
        <end position="243"/>
    </location>
</feature>
<feature type="active site" description="Proton acceptor" evidence="2">
    <location>
        <position position="123"/>
    </location>
</feature>
<feature type="binding site" evidence="1">
    <location>
        <position position="24"/>
    </location>
    <ligand>
        <name>NAD(+)</name>
        <dbReference type="ChEBI" id="CHEBI:57540"/>
    </ligand>
</feature>
<feature type="binding site" evidence="1">
    <location>
        <position position="35"/>
    </location>
    <ligand>
        <name>NAD(+)</name>
        <dbReference type="ChEBI" id="CHEBI:57540"/>
    </ligand>
</feature>
<feature type="binding site" evidence="1">
    <location>
        <position position="35"/>
    </location>
    <ligand>
        <name>nicotinamide</name>
        <dbReference type="ChEBI" id="CHEBI:17154"/>
    </ligand>
</feature>
<feature type="binding site" evidence="1">
    <location>
        <position position="36"/>
    </location>
    <ligand>
        <name>NAD(+)</name>
        <dbReference type="ChEBI" id="CHEBI:57540"/>
    </ligand>
</feature>
<feature type="binding site" evidence="1">
    <location>
        <position position="105"/>
    </location>
    <ligand>
        <name>NAD(+)</name>
        <dbReference type="ChEBI" id="CHEBI:57540"/>
    </ligand>
</feature>
<feature type="binding site" evidence="1">
    <location>
        <position position="107"/>
    </location>
    <ligand>
        <name>NAD(+)</name>
        <dbReference type="ChEBI" id="CHEBI:57540"/>
    </ligand>
</feature>
<feature type="binding site" evidence="1">
    <location>
        <position position="107"/>
    </location>
    <ligand>
        <name>nicotinamide</name>
        <dbReference type="ChEBI" id="CHEBI:17154"/>
    </ligand>
</feature>
<feature type="binding site" evidence="1">
    <location>
        <position position="108"/>
    </location>
    <ligand>
        <name>NAD(+)</name>
        <dbReference type="ChEBI" id="CHEBI:57540"/>
    </ligand>
</feature>
<feature type="binding site" evidence="1">
    <location>
        <position position="108"/>
    </location>
    <ligand>
        <name>nicotinamide</name>
        <dbReference type="ChEBI" id="CHEBI:17154"/>
    </ligand>
</feature>
<feature type="binding site" evidence="1">
    <location>
        <position position="123"/>
    </location>
    <ligand>
        <name>NAD(+)</name>
        <dbReference type="ChEBI" id="CHEBI:57540"/>
    </ligand>
</feature>
<feature type="binding site" evidence="1">
    <location>
        <position position="131"/>
    </location>
    <ligand>
        <name>Zn(2+)</name>
        <dbReference type="ChEBI" id="CHEBI:29105"/>
    </ligand>
</feature>
<feature type="binding site" evidence="1">
    <location>
        <position position="134"/>
    </location>
    <ligand>
        <name>Zn(2+)</name>
        <dbReference type="ChEBI" id="CHEBI:29105"/>
    </ligand>
</feature>
<feature type="binding site" evidence="1">
    <location>
        <position position="151"/>
    </location>
    <ligand>
        <name>Zn(2+)</name>
        <dbReference type="ChEBI" id="CHEBI:29105"/>
    </ligand>
</feature>
<feature type="binding site" evidence="1">
    <location>
        <position position="154"/>
    </location>
    <ligand>
        <name>Zn(2+)</name>
        <dbReference type="ChEBI" id="CHEBI:29105"/>
    </ligand>
</feature>
<feature type="binding site" evidence="1">
    <location>
        <position position="192"/>
    </location>
    <ligand>
        <name>NAD(+)</name>
        <dbReference type="ChEBI" id="CHEBI:57540"/>
    </ligand>
</feature>
<feature type="binding site" evidence="1">
    <location>
        <position position="193"/>
    </location>
    <ligand>
        <name>NAD(+)</name>
        <dbReference type="ChEBI" id="CHEBI:57540"/>
    </ligand>
</feature>
<feature type="binding site" evidence="1">
    <location>
        <position position="215"/>
    </location>
    <ligand>
        <name>NAD(+)</name>
        <dbReference type="ChEBI" id="CHEBI:57540"/>
    </ligand>
</feature>
<feature type="binding site" evidence="1">
    <location>
        <position position="232"/>
    </location>
    <ligand>
        <name>NAD(+)</name>
        <dbReference type="ChEBI" id="CHEBI:57540"/>
    </ligand>
</feature>
<dbReference type="EC" id="2.3.1.286" evidence="1 2"/>
<dbReference type="EMBL" id="BX571856">
    <property type="protein sequence ID" value="CAG41266.1"/>
    <property type="molecule type" value="Genomic_DNA"/>
</dbReference>
<dbReference type="SMR" id="Q6GEN2"/>
<dbReference type="KEGG" id="sar:SAR2288"/>
<dbReference type="HOGENOM" id="CLU_023643_3_0_9"/>
<dbReference type="Proteomes" id="UP000000596">
    <property type="component" value="Chromosome"/>
</dbReference>
<dbReference type="GO" id="GO:0005737">
    <property type="term" value="C:cytoplasm"/>
    <property type="evidence" value="ECO:0007669"/>
    <property type="project" value="UniProtKB-SubCell"/>
</dbReference>
<dbReference type="GO" id="GO:0017136">
    <property type="term" value="F:histone deacetylase activity, NAD-dependent"/>
    <property type="evidence" value="ECO:0007669"/>
    <property type="project" value="TreeGrafter"/>
</dbReference>
<dbReference type="GO" id="GO:0070403">
    <property type="term" value="F:NAD+ binding"/>
    <property type="evidence" value="ECO:0007669"/>
    <property type="project" value="UniProtKB-UniRule"/>
</dbReference>
<dbReference type="GO" id="GO:0008270">
    <property type="term" value="F:zinc ion binding"/>
    <property type="evidence" value="ECO:0007669"/>
    <property type="project" value="UniProtKB-UniRule"/>
</dbReference>
<dbReference type="CDD" id="cd01411">
    <property type="entry name" value="SIR2H"/>
    <property type="match status" value="1"/>
</dbReference>
<dbReference type="Gene3D" id="3.30.1600.10">
    <property type="entry name" value="SIR2/SIRT2 'Small Domain"/>
    <property type="match status" value="1"/>
</dbReference>
<dbReference type="Gene3D" id="3.40.50.1220">
    <property type="entry name" value="TPP-binding domain"/>
    <property type="match status" value="1"/>
</dbReference>
<dbReference type="HAMAP" id="MF_01968">
    <property type="entry name" value="Sirtuin_ClassU"/>
    <property type="match status" value="1"/>
</dbReference>
<dbReference type="InterPro" id="IPR029035">
    <property type="entry name" value="DHS-like_NAD/FAD-binding_dom"/>
</dbReference>
<dbReference type="InterPro" id="IPR050134">
    <property type="entry name" value="NAD-dep_sirtuin_deacylases"/>
</dbReference>
<dbReference type="InterPro" id="IPR003000">
    <property type="entry name" value="Sirtuin"/>
</dbReference>
<dbReference type="InterPro" id="IPR026591">
    <property type="entry name" value="Sirtuin_cat_small_dom_sf"/>
</dbReference>
<dbReference type="InterPro" id="IPR028628">
    <property type="entry name" value="Sirtuin_class_U"/>
</dbReference>
<dbReference type="InterPro" id="IPR026590">
    <property type="entry name" value="Ssirtuin_cat_dom"/>
</dbReference>
<dbReference type="NCBIfam" id="NF001752">
    <property type="entry name" value="PRK00481.1-1"/>
    <property type="match status" value="1"/>
</dbReference>
<dbReference type="PANTHER" id="PTHR11085:SF4">
    <property type="entry name" value="NAD-DEPENDENT PROTEIN DEACYLASE"/>
    <property type="match status" value="1"/>
</dbReference>
<dbReference type="PANTHER" id="PTHR11085">
    <property type="entry name" value="NAD-DEPENDENT PROTEIN DEACYLASE SIRTUIN-5, MITOCHONDRIAL-RELATED"/>
    <property type="match status" value="1"/>
</dbReference>
<dbReference type="Pfam" id="PF02146">
    <property type="entry name" value="SIR2"/>
    <property type="match status" value="1"/>
</dbReference>
<dbReference type="SUPFAM" id="SSF52467">
    <property type="entry name" value="DHS-like NAD/FAD-binding domain"/>
    <property type="match status" value="1"/>
</dbReference>
<dbReference type="PROSITE" id="PS50305">
    <property type="entry name" value="SIRTUIN"/>
    <property type="match status" value="1"/>
</dbReference>
<protein>
    <recommendedName>
        <fullName evidence="1">NAD-dependent protein deacetylase</fullName>
        <ecNumber evidence="1 2">2.3.1.286</ecNumber>
    </recommendedName>
    <alternativeName>
        <fullName evidence="1">Regulatory protein SIR2 homolog</fullName>
    </alternativeName>
</protein>
<reference key="1">
    <citation type="journal article" date="2004" name="Proc. Natl. Acad. Sci. U.S.A.">
        <title>Complete genomes of two clinical Staphylococcus aureus strains: evidence for the rapid evolution of virulence and drug resistance.</title>
        <authorList>
            <person name="Holden M.T.G."/>
            <person name="Feil E.J."/>
            <person name="Lindsay J.A."/>
            <person name="Peacock S.J."/>
            <person name="Day N.P.J."/>
            <person name="Enright M.C."/>
            <person name="Foster T.J."/>
            <person name="Moore C.E."/>
            <person name="Hurst L."/>
            <person name="Atkin R."/>
            <person name="Barron A."/>
            <person name="Bason N."/>
            <person name="Bentley S.D."/>
            <person name="Chillingworth C."/>
            <person name="Chillingworth T."/>
            <person name="Churcher C."/>
            <person name="Clark L."/>
            <person name="Corton C."/>
            <person name="Cronin A."/>
            <person name="Doggett J."/>
            <person name="Dowd L."/>
            <person name="Feltwell T."/>
            <person name="Hance Z."/>
            <person name="Harris B."/>
            <person name="Hauser H."/>
            <person name="Holroyd S."/>
            <person name="Jagels K."/>
            <person name="James K.D."/>
            <person name="Lennard N."/>
            <person name="Line A."/>
            <person name="Mayes R."/>
            <person name="Moule S."/>
            <person name="Mungall K."/>
            <person name="Ormond D."/>
            <person name="Quail M.A."/>
            <person name="Rabbinowitsch E."/>
            <person name="Rutherford K.M."/>
            <person name="Sanders M."/>
            <person name="Sharp S."/>
            <person name="Simmonds M."/>
            <person name="Stevens K."/>
            <person name="Whitehead S."/>
            <person name="Barrell B.G."/>
            <person name="Spratt B.G."/>
            <person name="Parkhill J."/>
        </authorList>
    </citation>
    <scope>NUCLEOTIDE SEQUENCE [LARGE SCALE GENOMIC DNA]</scope>
    <source>
        <strain>MRSA252</strain>
    </source>
</reference>
<comment type="function">
    <text evidence="1">NAD-dependent protein deacetylase which modulates the activities of several enzymes which are inactive in their acetylated form.</text>
</comment>
<comment type="catalytic activity">
    <reaction evidence="1">
        <text>N(6)-acetyl-L-lysyl-[protein] + NAD(+) + H2O = 2''-O-acetyl-ADP-D-ribose + nicotinamide + L-lysyl-[protein]</text>
        <dbReference type="Rhea" id="RHEA:43636"/>
        <dbReference type="Rhea" id="RHEA-COMP:9752"/>
        <dbReference type="Rhea" id="RHEA-COMP:10731"/>
        <dbReference type="ChEBI" id="CHEBI:15377"/>
        <dbReference type="ChEBI" id="CHEBI:17154"/>
        <dbReference type="ChEBI" id="CHEBI:29969"/>
        <dbReference type="ChEBI" id="CHEBI:57540"/>
        <dbReference type="ChEBI" id="CHEBI:61930"/>
        <dbReference type="ChEBI" id="CHEBI:83767"/>
        <dbReference type="EC" id="2.3.1.286"/>
    </reaction>
</comment>
<comment type="cofactor">
    <cofactor evidence="1">
        <name>Zn(2+)</name>
        <dbReference type="ChEBI" id="CHEBI:29105"/>
    </cofactor>
    <text evidence="1">Binds 1 zinc ion per subunit.</text>
</comment>
<comment type="subcellular location">
    <subcellularLocation>
        <location evidence="1">Cytoplasm</location>
    </subcellularLocation>
</comment>
<comment type="similarity">
    <text evidence="1">Belongs to the sirtuin family. Class U subfamily.</text>
</comment>